<dbReference type="EC" id="6.3.4.4" evidence="1"/>
<dbReference type="EMBL" id="CP000569">
    <property type="protein sequence ID" value="ABN74167.1"/>
    <property type="molecule type" value="Genomic_DNA"/>
</dbReference>
<dbReference type="RefSeq" id="WP_009875343.1">
    <property type="nucleotide sequence ID" value="NC_009053.1"/>
</dbReference>
<dbReference type="SMR" id="A3N181"/>
<dbReference type="STRING" id="416269.APL_1075"/>
<dbReference type="EnsemblBacteria" id="ABN74167">
    <property type="protein sequence ID" value="ABN74167"/>
    <property type="gene ID" value="APL_1075"/>
</dbReference>
<dbReference type="KEGG" id="apl:APL_1075"/>
<dbReference type="PATRIC" id="fig|416269.6.peg.1123"/>
<dbReference type="eggNOG" id="COG0104">
    <property type="taxonomic scope" value="Bacteria"/>
</dbReference>
<dbReference type="HOGENOM" id="CLU_029848_0_0_6"/>
<dbReference type="UniPathway" id="UPA00075">
    <property type="reaction ID" value="UER00335"/>
</dbReference>
<dbReference type="Proteomes" id="UP000001432">
    <property type="component" value="Chromosome"/>
</dbReference>
<dbReference type="GO" id="GO:0005737">
    <property type="term" value="C:cytoplasm"/>
    <property type="evidence" value="ECO:0007669"/>
    <property type="project" value="UniProtKB-SubCell"/>
</dbReference>
<dbReference type="GO" id="GO:0004019">
    <property type="term" value="F:adenylosuccinate synthase activity"/>
    <property type="evidence" value="ECO:0007669"/>
    <property type="project" value="UniProtKB-UniRule"/>
</dbReference>
<dbReference type="GO" id="GO:0005525">
    <property type="term" value="F:GTP binding"/>
    <property type="evidence" value="ECO:0007669"/>
    <property type="project" value="UniProtKB-UniRule"/>
</dbReference>
<dbReference type="GO" id="GO:0000287">
    <property type="term" value="F:magnesium ion binding"/>
    <property type="evidence" value="ECO:0007669"/>
    <property type="project" value="UniProtKB-UniRule"/>
</dbReference>
<dbReference type="GO" id="GO:0044208">
    <property type="term" value="P:'de novo' AMP biosynthetic process"/>
    <property type="evidence" value="ECO:0007669"/>
    <property type="project" value="UniProtKB-UniRule"/>
</dbReference>
<dbReference type="GO" id="GO:0046040">
    <property type="term" value="P:IMP metabolic process"/>
    <property type="evidence" value="ECO:0007669"/>
    <property type="project" value="TreeGrafter"/>
</dbReference>
<dbReference type="CDD" id="cd03108">
    <property type="entry name" value="AdSS"/>
    <property type="match status" value="1"/>
</dbReference>
<dbReference type="FunFam" id="1.10.300.10:FF:000001">
    <property type="entry name" value="Adenylosuccinate synthetase"/>
    <property type="match status" value="1"/>
</dbReference>
<dbReference type="FunFam" id="3.90.170.10:FF:000001">
    <property type="entry name" value="Adenylosuccinate synthetase"/>
    <property type="match status" value="1"/>
</dbReference>
<dbReference type="Gene3D" id="3.40.440.10">
    <property type="entry name" value="Adenylosuccinate Synthetase, subunit A, domain 1"/>
    <property type="match status" value="1"/>
</dbReference>
<dbReference type="Gene3D" id="1.10.300.10">
    <property type="entry name" value="Adenylosuccinate Synthetase, subunit A, domain 2"/>
    <property type="match status" value="1"/>
</dbReference>
<dbReference type="Gene3D" id="3.90.170.10">
    <property type="entry name" value="Adenylosuccinate Synthetase, subunit A, domain 3"/>
    <property type="match status" value="1"/>
</dbReference>
<dbReference type="HAMAP" id="MF_00011">
    <property type="entry name" value="Adenylosucc_synth"/>
    <property type="match status" value="1"/>
</dbReference>
<dbReference type="InterPro" id="IPR018220">
    <property type="entry name" value="Adenylosuccin_syn_GTP-bd"/>
</dbReference>
<dbReference type="InterPro" id="IPR033128">
    <property type="entry name" value="Adenylosuccin_syn_Lys_AS"/>
</dbReference>
<dbReference type="InterPro" id="IPR042109">
    <property type="entry name" value="Adenylosuccinate_synth_dom1"/>
</dbReference>
<dbReference type="InterPro" id="IPR042110">
    <property type="entry name" value="Adenylosuccinate_synth_dom2"/>
</dbReference>
<dbReference type="InterPro" id="IPR042111">
    <property type="entry name" value="Adenylosuccinate_synth_dom3"/>
</dbReference>
<dbReference type="InterPro" id="IPR001114">
    <property type="entry name" value="Adenylosuccinate_synthetase"/>
</dbReference>
<dbReference type="InterPro" id="IPR027417">
    <property type="entry name" value="P-loop_NTPase"/>
</dbReference>
<dbReference type="NCBIfam" id="NF002223">
    <property type="entry name" value="PRK01117.1"/>
    <property type="match status" value="1"/>
</dbReference>
<dbReference type="NCBIfam" id="TIGR00184">
    <property type="entry name" value="purA"/>
    <property type="match status" value="1"/>
</dbReference>
<dbReference type="PANTHER" id="PTHR11846">
    <property type="entry name" value="ADENYLOSUCCINATE SYNTHETASE"/>
    <property type="match status" value="1"/>
</dbReference>
<dbReference type="PANTHER" id="PTHR11846:SF0">
    <property type="entry name" value="ADENYLOSUCCINATE SYNTHETASE"/>
    <property type="match status" value="1"/>
</dbReference>
<dbReference type="Pfam" id="PF00709">
    <property type="entry name" value="Adenylsucc_synt"/>
    <property type="match status" value="1"/>
</dbReference>
<dbReference type="SMART" id="SM00788">
    <property type="entry name" value="Adenylsucc_synt"/>
    <property type="match status" value="1"/>
</dbReference>
<dbReference type="SUPFAM" id="SSF52540">
    <property type="entry name" value="P-loop containing nucleoside triphosphate hydrolases"/>
    <property type="match status" value="1"/>
</dbReference>
<dbReference type="PROSITE" id="PS01266">
    <property type="entry name" value="ADENYLOSUCCIN_SYN_1"/>
    <property type="match status" value="1"/>
</dbReference>
<dbReference type="PROSITE" id="PS00513">
    <property type="entry name" value="ADENYLOSUCCIN_SYN_2"/>
    <property type="match status" value="1"/>
</dbReference>
<accession>A3N181</accession>
<reference key="1">
    <citation type="journal article" date="2008" name="J. Bacteriol.">
        <title>The complete genome sequence of Actinobacillus pleuropneumoniae L20 (serotype 5b).</title>
        <authorList>
            <person name="Foote S.J."/>
            <person name="Bosse J.T."/>
            <person name="Bouevitch A.B."/>
            <person name="Langford P.R."/>
            <person name="Young N.M."/>
            <person name="Nash J.H.E."/>
        </authorList>
    </citation>
    <scope>NUCLEOTIDE SEQUENCE [LARGE SCALE GENOMIC DNA]</scope>
    <source>
        <strain>L20</strain>
    </source>
</reference>
<feature type="chain" id="PRO_1000000770" description="Adenylosuccinate synthetase">
    <location>
        <begin position="1"/>
        <end position="432"/>
    </location>
</feature>
<feature type="active site" description="Proton acceptor" evidence="1">
    <location>
        <position position="14"/>
    </location>
</feature>
<feature type="active site" description="Proton donor" evidence="1">
    <location>
        <position position="42"/>
    </location>
</feature>
<feature type="binding site" evidence="1">
    <location>
        <begin position="13"/>
        <end position="19"/>
    </location>
    <ligand>
        <name>GTP</name>
        <dbReference type="ChEBI" id="CHEBI:37565"/>
    </ligand>
</feature>
<feature type="binding site" description="in other chain" evidence="1">
    <location>
        <begin position="14"/>
        <end position="17"/>
    </location>
    <ligand>
        <name>IMP</name>
        <dbReference type="ChEBI" id="CHEBI:58053"/>
        <note>ligand shared between dimeric partners</note>
    </ligand>
</feature>
<feature type="binding site" evidence="1">
    <location>
        <position position="14"/>
    </location>
    <ligand>
        <name>Mg(2+)</name>
        <dbReference type="ChEBI" id="CHEBI:18420"/>
    </ligand>
</feature>
<feature type="binding site" description="in other chain" evidence="1">
    <location>
        <begin position="39"/>
        <end position="42"/>
    </location>
    <ligand>
        <name>IMP</name>
        <dbReference type="ChEBI" id="CHEBI:58053"/>
        <note>ligand shared between dimeric partners</note>
    </ligand>
</feature>
<feature type="binding site" evidence="1">
    <location>
        <begin position="41"/>
        <end position="43"/>
    </location>
    <ligand>
        <name>GTP</name>
        <dbReference type="ChEBI" id="CHEBI:37565"/>
    </ligand>
</feature>
<feature type="binding site" evidence="1">
    <location>
        <position position="41"/>
    </location>
    <ligand>
        <name>Mg(2+)</name>
        <dbReference type="ChEBI" id="CHEBI:18420"/>
    </ligand>
</feature>
<feature type="binding site" description="in other chain" evidence="1">
    <location>
        <position position="130"/>
    </location>
    <ligand>
        <name>IMP</name>
        <dbReference type="ChEBI" id="CHEBI:58053"/>
        <note>ligand shared between dimeric partners</note>
    </ligand>
</feature>
<feature type="binding site" evidence="1">
    <location>
        <position position="144"/>
    </location>
    <ligand>
        <name>IMP</name>
        <dbReference type="ChEBI" id="CHEBI:58053"/>
        <note>ligand shared between dimeric partners</note>
    </ligand>
</feature>
<feature type="binding site" description="in other chain" evidence="1">
    <location>
        <position position="225"/>
    </location>
    <ligand>
        <name>IMP</name>
        <dbReference type="ChEBI" id="CHEBI:58053"/>
        <note>ligand shared between dimeric partners</note>
    </ligand>
</feature>
<feature type="binding site" description="in other chain" evidence="1">
    <location>
        <position position="240"/>
    </location>
    <ligand>
        <name>IMP</name>
        <dbReference type="ChEBI" id="CHEBI:58053"/>
        <note>ligand shared between dimeric partners</note>
    </ligand>
</feature>
<feature type="binding site" evidence="1">
    <location>
        <begin position="300"/>
        <end position="306"/>
    </location>
    <ligand>
        <name>substrate</name>
    </ligand>
</feature>
<feature type="binding site" description="in other chain" evidence="1">
    <location>
        <position position="304"/>
    </location>
    <ligand>
        <name>IMP</name>
        <dbReference type="ChEBI" id="CHEBI:58053"/>
        <note>ligand shared between dimeric partners</note>
    </ligand>
</feature>
<feature type="binding site" evidence="1">
    <location>
        <position position="306"/>
    </location>
    <ligand>
        <name>GTP</name>
        <dbReference type="ChEBI" id="CHEBI:37565"/>
    </ligand>
</feature>
<feature type="binding site" evidence="1">
    <location>
        <begin position="332"/>
        <end position="334"/>
    </location>
    <ligand>
        <name>GTP</name>
        <dbReference type="ChEBI" id="CHEBI:37565"/>
    </ligand>
</feature>
<feature type="binding site" evidence="1">
    <location>
        <begin position="415"/>
        <end position="417"/>
    </location>
    <ligand>
        <name>GTP</name>
        <dbReference type="ChEBI" id="CHEBI:37565"/>
    </ligand>
</feature>
<protein>
    <recommendedName>
        <fullName evidence="1">Adenylosuccinate synthetase</fullName>
        <shortName evidence="1">AMPSase</shortName>
        <shortName evidence="1">AdSS</shortName>
        <ecNumber evidence="1">6.3.4.4</ecNumber>
    </recommendedName>
    <alternativeName>
        <fullName evidence="1">IMP--aspartate ligase</fullName>
    </alternativeName>
</protein>
<organism>
    <name type="scientific">Actinobacillus pleuropneumoniae serotype 5b (strain L20)</name>
    <dbReference type="NCBI Taxonomy" id="416269"/>
    <lineage>
        <taxon>Bacteria</taxon>
        <taxon>Pseudomonadati</taxon>
        <taxon>Pseudomonadota</taxon>
        <taxon>Gammaproteobacteria</taxon>
        <taxon>Pasteurellales</taxon>
        <taxon>Pasteurellaceae</taxon>
        <taxon>Actinobacillus</taxon>
    </lineage>
</organism>
<evidence type="ECO:0000255" key="1">
    <source>
        <dbReference type="HAMAP-Rule" id="MF_00011"/>
    </source>
</evidence>
<comment type="function">
    <text evidence="1">Plays an important role in the de novo pathway of purine nucleotide biosynthesis. Catalyzes the first committed step in the biosynthesis of AMP from IMP.</text>
</comment>
<comment type="catalytic activity">
    <reaction evidence="1">
        <text>IMP + L-aspartate + GTP = N(6)-(1,2-dicarboxyethyl)-AMP + GDP + phosphate + 2 H(+)</text>
        <dbReference type="Rhea" id="RHEA:15753"/>
        <dbReference type="ChEBI" id="CHEBI:15378"/>
        <dbReference type="ChEBI" id="CHEBI:29991"/>
        <dbReference type="ChEBI" id="CHEBI:37565"/>
        <dbReference type="ChEBI" id="CHEBI:43474"/>
        <dbReference type="ChEBI" id="CHEBI:57567"/>
        <dbReference type="ChEBI" id="CHEBI:58053"/>
        <dbReference type="ChEBI" id="CHEBI:58189"/>
        <dbReference type="EC" id="6.3.4.4"/>
    </reaction>
</comment>
<comment type="cofactor">
    <cofactor evidence="1">
        <name>Mg(2+)</name>
        <dbReference type="ChEBI" id="CHEBI:18420"/>
    </cofactor>
    <text evidence="1">Binds 1 Mg(2+) ion per subunit.</text>
</comment>
<comment type="pathway">
    <text evidence="1">Purine metabolism; AMP biosynthesis via de novo pathway; AMP from IMP: step 1/2.</text>
</comment>
<comment type="subunit">
    <text evidence="1">Homodimer.</text>
</comment>
<comment type="subcellular location">
    <subcellularLocation>
        <location evidence="1">Cytoplasm</location>
    </subcellularLocation>
</comment>
<comment type="similarity">
    <text evidence="1">Belongs to the adenylosuccinate synthetase family.</text>
</comment>
<proteinExistence type="inferred from homology"/>
<keyword id="KW-0963">Cytoplasm</keyword>
<keyword id="KW-0342">GTP-binding</keyword>
<keyword id="KW-0436">Ligase</keyword>
<keyword id="KW-0460">Magnesium</keyword>
<keyword id="KW-0479">Metal-binding</keyword>
<keyword id="KW-0547">Nucleotide-binding</keyword>
<keyword id="KW-0658">Purine biosynthesis</keyword>
<keyword id="KW-1185">Reference proteome</keyword>
<sequence length="432" mass="47457">MGKSVAILGAQWGDEGKGKIVDLLTDRVKYVVRYQGGHNAGHTLIINGEKTVLRLIPSGILRDNVTCLIGNGVVLSPEALMKEMGELEARGINVRDRLKISEACPLILPYHVAMDHAREAALGKNKIGTTGRGIGPAYEDKVARRGLRVSDLFDKEAFAEKLKDILDYYNFQLVHYYKVEPVDFQKTLDDVFAIADVIKGMVADVTTLLHQARKEGVNILFEGAQGTMLDIDHGTYPFVTSSNTTAGGVATGSGFGPRNLDYVLGIIKAYCTRVGSGPFTTELFDEVGAEIARKGNEFGAVTGRPRRCGWFDAVAVRRAVQINSISGFCMTKLDVLDGFEELKICTAYKMPNGEIVEYAPMAAKDWKGVEPIYETMPGWSENTFRVTKREELPQAALDYIKRIEELVGVPVDILSTGPDRVETMILRDPFAA</sequence>
<name>PURA_ACTP2</name>
<gene>
    <name evidence="1" type="primary">purA</name>
    <name type="ordered locus">APL_1075</name>
</gene>